<accession>P9WMN8</accession>
<accession>L0T413</accession>
<accession>O06390</accession>
<accession>P63506</accession>
<evidence type="ECO:0000250" key="1"/>
<evidence type="ECO:0000256" key="2">
    <source>
        <dbReference type="SAM" id="MobiDB-lite"/>
    </source>
</evidence>
<evidence type="ECO:0000305" key="3"/>
<proteinExistence type="inferred from homology"/>
<dbReference type="EC" id="5.4.3.8"/>
<dbReference type="EMBL" id="AE000516">
    <property type="protein sequence ID" value="AAK44769.1"/>
    <property type="molecule type" value="Genomic_DNA"/>
</dbReference>
<dbReference type="PIR" id="G70544">
    <property type="entry name" value="G70544"/>
</dbReference>
<dbReference type="RefSeq" id="WP_003402844.1">
    <property type="nucleotide sequence ID" value="NZ_KK341227.1"/>
</dbReference>
<dbReference type="SMR" id="P9WMN8"/>
<dbReference type="KEGG" id="mtc:MT0546"/>
<dbReference type="PATRIC" id="fig|83331.31.peg.578"/>
<dbReference type="HOGENOM" id="CLU_016922_1_5_11"/>
<dbReference type="UniPathway" id="UPA00251">
    <property type="reaction ID" value="UER00317"/>
</dbReference>
<dbReference type="Proteomes" id="UP000001020">
    <property type="component" value="Chromosome"/>
</dbReference>
<dbReference type="GO" id="GO:0005737">
    <property type="term" value="C:cytoplasm"/>
    <property type="evidence" value="ECO:0007669"/>
    <property type="project" value="UniProtKB-SubCell"/>
</dbReference>
<dbReference type="GO" id="GO:0042286">
    <property type="term" value="F:glutamate-1-semialdehyde 2,1-aminomutase activity"/>
    <property type="evidence" value="ECO:0007669"/>
    <property type="project" value="UniProtKB-UniRule"/>
</dbReference>
<dbReference type="GO" id="GO:0030170">
    <property type="term" value="F:pyridoxal phosphate binding"/>
    <property type="evidence" value="ECO:0007669"/>
    <property type="project" value="InterPro"/>
</dbReference>
<dbReference type="GO" id="GO:0008483">
    <property type="term" value="F:transaminase activity"/>
    <property type="evidence" value="ECO:0007669"/>
    <property type="project" value="InterPro"/>
</dbReference>
<dbReference type="GO" id="GO:0006782">
    <property type="term" value="P:protoporphyrinogen IX biosynthetic process"/>
    <property type="evidence" value="ECO:0007669"/>
    <property type="project" value="UniProtKB-UniRule"/>
</dbReference>
<dbReference type="CDD" id="cd00610">
    <property type="entry name" value="OAT_like"/>
    <property type="match status" value="1"/>
</dbReference>
<dbReference type="FunFam" id="3.40.640.10:FF:000021">
    <property type="entry name" value="Glutamate-1-semialdehyde 2,1-aminomutase"/>
    <property type="match status" value="1"/>
</dbReference>
<dbReference type="Gene3D" id="3.90.1150.10">
    <property type="entry name" value="Aspartate Aminotransferase, domain 1"/>
    <property type="match status" value="1"/>
</dbReference>
<dbReference type="Gene3D" id="3.40.640.10">
    <property type="entry name" value="Type I PLP-dependent aspartate aminotransferase-like (Major domain)"/>
    <property type="match status" value="1"/>
</dbReference>
<dbReference type="HAMAP" id="MF_00375">
    <property type="entry name" value="HemL_aminotrans_3"/>
    <property type="match status" value="1"/>
</dbReference>
<dbReference type="InterPro" id="IPR004639">
    <property type="entry name" value="4pyrrol_synth_GluAld_NH2Trfase"/>
</dbReference>
<dbReference type="InterPro" id="IPR005814">
    <property type="entry name" value="Aminotrans_3"/>
</dbReference>
<dbReference type="InterPro" id="IPR049704">
    <property type="entry name" value="Aminotrans_3_PPA_site"/>
</dbReference>
<dbReference type="InterPro" id="IPR015424">
    <property type="entry name" value="PyrdxlP-dep_Trfase"/>
</dbReference>
<dbReference type="InterPro" id="IPR015421">
    <property type="entry name" value="PyrdxlP-dep_Trfase_major"/>
</dbReference>
<dbReference type="InterPro" id="IPR015422">
    <property type="entry name" value="PyrdxlP-dep_Trfase_small"/>
</dbReference>
<dbReference type="NCBIfam" id="TIGR00713">
    <property type="entry name" value="hemL"/>
    <property type="match status" value="1"/>
</dbReference>
<dbReference type="NCBIfam" id="NF000818">
    <property type="entry name" value="PRK00062.1"/>
    <property type="match status" value="1"/>
</dbReference>
<dbReference type="PANTHER" id="PTHR43713">
    <property type="entry name" value="GLUTAMATE-1-SEMIALDEHYDE 2,1-AMINOMUTASE"/>
    <property type="match status" value="1"/>
</dbReference>
<dbReference type="PANTHER" id="PTHR43713:SF3">
    <property type="entry name" value="GLUTAMATE-1-SEMIALDEHYDE 2,1-AMINOMUTASE 1, CHLOROPLASTIC-RELATED"/>
    <property type="match status" value="1"/>
</dbReference>
<dbReference type="Pfam" id="PF00202">
    <property type="entry name" value="Aminotran_3"/>
    <property type="match status" value="1"/>
</dbReference>
<dbReference type="SUPFAM" id="SSF53383">
    <property type="entry name" value="PLP-dependent transferases"/>
    <property type="match status" value="1"/>
</dbReference>
<dbReference type="PROSITE" id="PS00600">
    <property type="entry name" value="AA_TRANSFER_CLASS_3"/>
    <property type="match status" value="1"/>
</dbReference>
<reference key="1">
    <citation type="journal article" date="2002" name="J. Bacteriol.">
        <title>Whole-genome comparison of Mycobacterium tuberculosis clinical and laboratory strains.</title>
        <authorList>
            <person name="Fleischmann R.D."/>
            <person name="Alland D."/>
            <person name="Eisen J.A."/>
            <person name="Carpenter L."/>
            <person name="White O."/>
            <person name="Peterson J.D."/>
            <person name="DeBoy R.T."/>
            <person name="Dodson R.J."/>
            <person name="Gwinn M.L."/>
            <person name="Haft D.H."/>
            <person name="Hickey E.K."/>
            <person name="Kolonay J.F."/>
            <person name="Nelson W.C."/>
            <person name="Umayam L.A."/>
            <person name="Ermolaeva M.D."/>
            <person name="Salzberg S.L."/>
            <person name="Delcher A."/>
            <person name="Utterback T.R."/>
            <person name="Weidman J.F."/>
            <person name="Khouri H.M."/>
            <person name="Gill J."/>
            <person name="Mikula A."/>
            <person name="Bishai W."/>
            <person name="Jacobs W.R. Jr."/>
            <person name="Venter J.C."/>
            <person name="Fraser C.M."/>
        </authorList>
    </citation>
    <scope>NUCLEOTIDE SEQUENCE [LARGE SCALE GENOMIC DNA]</scope>
    <source>
        <strain>CDC 1551 / Oshkosh</strain>
    </source>
</reference>
<comment type="catalytic activity">
    <reaction>
        <text>(S)-4-amino-5-oxopentanoate = 5-aminolevulinate</text>
        <dbReference type="Rhea" id="RHEA:14265"/>
        <dbReference type="ChEBI" id="CHEBI:57501"/>
        <dbReference type="ChEBI" id="CHEBI:356416"/>
        <dbReference type="EC" id="5.4.3.8"/>
    </reaction>
</comment>
<comment type="cofactor">
    <cofactor evidence="1">
        <name>pyridoxal 5'-phosphate</name>
        <dbReference type="ChEBI" id="CHEBI:597326"/>
    </cofactor>
</comment>
<comment type="pathway">
    <text>Porphyrin-containing compound metabolism; protoporphyrin-IX biosynthesis; 5-aminolevulinate from L-glutamyl-tRNA(Glu): step 2/2.</text>
</comment>
<comment type="subunit">
    <text evidence="1">Homodimer.</text>
</comment>
<comment type="subcellular location">
    <subcellularLocation>
        <location evidence="3">Cytoplasm</location>
    </subcellularLocation>
</comment>
<comment type="similarity">
    <text evidence="3">Belongs to the class-III pyridoxal-phosphate-dependent aminotransferase family. HemL subfamily.</text>
</comment>
<feature type="chain" id="PRO_0000427271" description="Glutamate-1-semialdehyde 2,1-aminomutase">
    <location>
        <begin position="1"/>
        <end position="462"/>
    </location>
</feature>
<feature type="region of interest" description="Disordered" evidence="2">
    <location>
        <begin position="178"/>
        <end position="200"/>
    </location>
</feature>
<feature type="compositionally biased region" description="Low complexity" evidence="2">
    <location>
        <begin position="182"/>
        <end position="192"/>
    </location>
</feature>
<feature type="modified residue" description="N6-(pyridoxal phosphate)lysine" evidence="1">
    <location>
        <position position="297"/>
    </location>
</feature>
<organism>
    <name type="scientific">Mycobacterium tuberculosis (strain CDC 1551 / Oshkosh)</name>
    <dbReference type="NCBI Taxonomy" id="83331"/>
    <lineage>
        <taxon>Bacteria</taxon>
        <taxon>Bacillati</taxon>
        <taxon>Actinomycetota</taxon>
        <taxon>Actinomycetes</taxon>
        <taxon>Mycobacteriales</taxon>
        <taxon>Mycobacteriaceae</taxon>
        <taxon>Mycobacterium</taxon>
        <taxon>Mycobacterium tuberculosis complex</taxon>
    </lineage>
</organism>
<gene>
    <name type="primary">hemL</name>
    <name type="ordered locus">MT0546</name>
</gene>
<name>GSA_MYCTO</name>
<protein>
    <recommendedName>
        <fullName>Glutamate-1-semialdehyde 2,1-aminomutase</fullName>
        <shortName>GSA</shortName>
        <ecNumber>5.4.3.8</ecNumber>
    </recommendedName>
    <alternativeName>
        <fullName>Glutamate-1-semialdehyde aminotransferase</fullName>
        <shortName>GSA-AT</shortName>
    </alternativeName>
</protein>
<keyword id="KW-0963">Cytoplasm</keyword>
<keyword id="KW-0413">Isomerase</keyword>
<keyword id="KW-0627">Porphyrin biosynthesis</keyword>
<keyword id="KW-0663">Pyridoxal phosphate</keyword>
<keyword id="KW-1185">Reference proteome</keyword>
<sequence>MGSTEQATSRVRGAARTSAQLFEAACSVIPGGVNSPVRAFTAVGGTPRFITEAHGCWLIDADGNRYVDLVCSWGPMILGHAHPAVVEAVAKAAARGLSFGAPTPAETQLAGEIIGRVAPVERIRLVNSGTEATMSAVRLARGFTGRAKIVKFSGCYHGHVDALLADAGSGVATLGLCDDPQRPASPRSQSSRGLPSSPGVTGAAAADTIVLPYNDIDAVQQTFARFGEQIAAVITEASPGNMGVVPPGPGFNAALRAITAEHGALLILDEVMTGFRVSRSGWYGIDPVPADLFAFGKVMSGGMPAAAFGGRAEVMQRLAPLGPVYQAGTLSGNPVAVAAGLATLRAADDAVYTALDANADRLAGLLSEALTDAVVPHQISRAGNMLSVFFGETPVTDFASARASQTWRYPAFFHAMLDAGVYPPCSAFEAWFVSAALDDAAFGRIANALPAAARAAAQERPA</sequence>